<sequence length="871" mass="97698">MAMLVTNLSSSSFCFFSSPHLQNQKEIRSGVRVRKYVIFNRASLRTVSDCVDSITTFDRSVTDANTQLRRFCESGNLENAVKLLCVSGKWDIDPRTLCSVLQLCADSKSLKDGKEVDNFIRGNGFVIDSNLGSKLSLMYTNCGDLKEASRVFDEVKIEKALFWNILMNELAKSGDFSGSIGLFKKMMSSGVEMDSYTFSCVSKSFSSLRSVHGGEQLHGFILKSGFGERNSVGNSLVAFYLKNQRVDSARKVFDEMTERDVISWNSIINGYVSNGLAEKGLSVFVQMLVSGIEIDLATIVSVFAGCADSRLISLGRAVHSIGVKACFSREDRFCNTLLDMYSKCGDLDSAKAVFREMSDRSVVSYTSMIAGYAREGLAGEAVKLFEEMEEEGISPDVYTVTAVLNCCARYRLLDEGKRVHEWIKENDLGFDIFVSNALMDMYAKCGSMQEAELVFSEMRVKDIISWNTIIGGYSKNCYANEALSLFNLLLEEKRFSPDERTVACVLPACASLSAFDKGREIHGYIMRNGYFSDRHVANSLVDMYAKCGALLLAHMLFDDIASKDLVSWTVMIAGYGMHGFGKEAIALFNQMRQAGIEADEISFVSLLYACSHSGLVDEGWRFFNIMRHECKIEPTVEHYACIVDMLARTGDLIKAYRFIENMPIPPDATIWGALLCGCRIHHDVKLAEKVAEKVFELEPENTGYYVLMANIYAEAEKWEQVKRLRKRIGQRGLRKNPGCSWIEIKGRVNIFVAGDSSNPETENIEAFLRKVRARMIEEGYSPLTKYALIDAEEMEKEEALCGHSEKLAMALGIISSGHGKIIRVTKNLRVCGDCHEMAKFMSKLTRREIVLRDSNRFHQFKDGHCSCRGFW</sequence>
<proteinExistence type="evidence at transcript level"/>
<accession>Q9SN39</accession>
<accession>Q56XZ4</accession>
<evidence type="ECO:0000250" key="1">
    <source>
        <dbReference type="UniProtKB" id="Q9SZT8"/>
    </source>
</evidence>
<evidence type="ECO:0000255" key="2"/>
<evidence type="ECO:0000269" key="3">
    <source>
    </source>
</evidence>
<evidence type="ECO:0000269" key="4">
    <source>
    </source>
</evidence>
<evidence type="ECO:0000303" key="5">
    <source>
    </source>
</evidence>
<evidence type="ECO:0000303" key="6">
    <source>
    </source>
</evidence>
<evidence type="ECO:0000305" key="7"/>
<protein>
    <recommendedName>
        <fullName evidence="7">Pentatricopeptide repeat-containing protein DOT4, chloroplastic</fullName>
    </recommendedName>
    <alternativeName>
        <fullName evidence="6">Protein DEFECTIVELY ORGANIZED TRIBUTARIES 4</fullName>
    </alternativeName>
    <alternativeName>
        <fullName evidence="5">Protein FLAVODENTATA</fullName>
    </alternativeName>
</protein>
<organism>
    <name type="scientific">Arabidopsis thaliana</name>
    <name type="common">Mouse-ear cress</name>
    <dbReference type="NCBI Taxonomy" id="3702"/>
    <lineage>
        <taxon>Eukaryota</taxon>
        <taxon>Viridiplantae</taxon>
        <taxon>Streptophyta</taxon>
        <taxon>Embryophyta</taxon>
        <taxon>Tracheophyta</taxon>
        <taxon>Spermatophyta</taxon>
        <taxon>Magnoliopsida</taxon>
        <taxon>eudicotyledons</taxon>
        <taxon>Gunneridae</taxon>
        <taxon>Pentapetalae</taxon>
        <taxon>rosids</taxon>
        <taxon>malvids</taxon>
        <taxon>Brassicales</taxon>
        <taxon>Brassicaceae</taxon>
        <taxon>Camelineae</taxon>
        <taxon>Arabidopsis</taxon>
    </lineage>
</organism>
<reference key="1">
    <citation type="journal article" date="1999" name="Nature">
        <title>Sequence and analysis of chromosome 4 of the plant Arabidopsis thaliana.</title>
        <authorList>
            <person name="Mayer K.F.X."/>
            <person name="Schueller C."/>
            <person name="Wambutt R."/>
            <person name="Murphy G."/>
            <person name="Volckaert G."/>
            <person name="Pohl T."/>
            <person name="Duesterhoeft A."/>
            <person name="Stiekema W."/>
            <person name="Entian K.-D."/>
            <person name="Terryn N."/>
            <person name="Harris B."/>
            <person name="Ansorge W."/>
            <person name="Brandt P."/>
            <person name="Grivell L.A."/>
            <person name="Rieger M."/>
            <person name="Weichselgartner M."/>
            <person name="de Simone V."/>
            <person name="Obermaier B."/>
            <person name="Mache R."/>
            <person name="Mueller M."/>
            <person name="Kreis M."/>
            <person name="Delseny M."/>
            <person name="Puigdomenech P."/>
            <person name="Watson M."/>
            <person name="Schmidtheini T."/>
            <person name="Reichert B."/>
            <person name="Portetelle D."/>
            <person name="Perez-Alonso M."/>
            <person name="Boutry M."/>
            <person name="Bancroft I."/>
            <person name="Vos P."/>
            <person name="Hoheisel J."/>
            <person name="Zimmermann W."/>
            <person name="Wedler H."/>
            <person name="Ridley P."/>
            <person name="Langham S.-A."/>
            <person name="McCullagh B."/>
            <person name="Bilham L."/>
            <person name="Robben J."/>
            <person name="van der Schueren J."/>
            <person name="Grymonprez B."/>
            <person name="Chuang Y.-J."/>
            <person name="Vandenbussche F."/>
            <person name="Braeken M."/>
            <person name="Weltjens I."/>
            <person name="Voet M."/>
            <person name="Bastiaens I."/>
            <person name="Aert R."/>
            <person name="Defoor E."/>
            <person name="Weitzenegger T."/>
            <person name="Bothe G."/>
            <person name="Ramsperger U."/>
            <person name="Hilbert H."/>
            <person name="Braun M."/>
            <person name="Holzer E."/>
            <person name="Brandt A."/>
            <person name="Peters S."/>
            <person name="van Staveren M."/>
            <person name="Dirkse W."/>
            <person name="Mooijman P."/>
            <person name="Klein Lankhorst R."/>
            <person name="Rose M."/>
            <person name="Hauf J."/>
            <person name="Koetter P."/>
            <person name="Berneiser S."/>
            <person name="Hempel S."/>
            <person name="Feldpausch M."/>
            <person name="Lamberth S."/>
            <person name="Van den Daele H."/>
            <person name="De Keyser A."/>
            <person name="Buysshaert C."/>
            <person name="Gielen J."/>
            <person name="Villarroel R."/>
            <person name="De Clercq R."/>
            <person name="van Montagu M."/>
            <person name="Rogers J."/>
            <person name="Cronin A."/>
            <person name="Quail M.A."/>
            <person name="Bray-Allen S."/>
            <person name="Clark L."/>
            <person name="Doggett J."/>
            <person name="Hall S."/>
            <person name="Kay M."/>
            <person name="Lennard N."/>
            <person name="McLay K."/>
            <person name="Mayes R."/>
            <person name="Pettett A."/>
            <person name="Rajandream M.A."/>
            <person name="Lyne M."/>
            <person name="Benes V."/>
            <person name="Rechmann S."/>
            <person name="Borkova D."/>
            <person name="Bloecker H."/>
            <person name="Scharfe M."/>
            <person name="Grimm M."/>
            <person name="Loehnert T.-H."/>
            <person name="Dose S."/>
            <person name="de Haan M."/>
            <person name="Maarse A.C."/>
            <person name="Schaefer M."/>
            <person name="Mueller-Auer S."/>
            <person name="Gabel C."/>
            <person name="Fuchs M."/>
            <person name="Fartmann B."/>
            <person name="Granderath K."/>
            <person name="Dauner D."/>
            <person name="Herzl A."/>
            <person name="Neumann S."/>
            <person name="Argiriou A."/>
            <person name="Vitale D."/>
            <person name="Liguori R."/>
            <person name="Piravandi E."/>
            <person name="Massenet O."/>
            <person name="Quigley F."/>
            <person name="Clabauld G."/>
            <person name="Muendlein A."/>
            <person name="Felber R."/>
            <person name="Schnabl S."/>
            <person name="Hiller R."/>
            <person name="Schmidt W."/>
            <person name="Lecharny A."/>
            <person name="Aubourg S."/>
            <person name="Chefdor F."/>
            <person name="Cooke R."/>
            <person name="Berger C."/>
            <person name="Monfort A."/>
            <person name="Casacuberta E."/>
            <person name="Gibbons T."/>
            <person name="Weber N."/>
            <person name="Vandenbol M."/>
            <person name="Bargues M."/>
            <person name="Terol J."/>
            <person name="Torres A."/>
            <person name="Perez-Perez A."/>
            <person name="Purnelle B."/>
            <person name="Bent E."/>
            <person name="Johnson S."/>
            <person name="Tacon D."/>
            <person name="Jesse T."/>
            <person name="Heijnen L."/>
            <person name="Schwarz S."/>
            <person name="Scholler P."/>
            <person name="Heber S."/>
            <person name="Francs P."/>
            <person name="Bielke C."/>
            <person name="Frishman D."/>
            <person name="Haase D."/>
            <person name="Lemcke K."/>
            <person name="Mewes H.-W."/>
            <person name="Stocker S."/>
            <person name="Zaccaria P."/>
            <person name="Bevan M."/>
            <person name="Wilson R.K."/>
            <person name="de la Bastide M."/>
            <person name="Habermann K."/>
            <person name="Parnell L."/>
            <person name="Dedhia N."/>
            <person name="Gnoj L."/>
            <person name="Schutz K."/>
            <person name="Huang E."/>
            <person name="Spiegel L."/>
            <person name="Sekhon M."/>
            <person name="Murray J."/>
            <person name="Sheet P."/>
            <person name="Cordes M."/>
            <person name="Abu-Threideh J."/>
            <person name="Stoneking T."/>
            <person name="Kalicki J."/>
            <person name="Graves T."/>
            <person name="Harmon G."/>
            <person name="Edwards J."/>
            <person name="Latreille P."/>
            <person name="Courtney L."/>
            <person name="Cloud J."/>
            <person name="Abbott A."/>
            <person name="Scott K."/>
            <person name="Johnson D."/>
            <person name="Minx P."/>
            <person name="Bentley D."/>
            <person name="Fulton B."/>
            <person name="Miller N."/>
            <person name="Greco T."/>
            <person name="Kemp K."/>
            <person name="Kramer J."/>
            <person name="Fulton L."/>
            <person name="Mardis E."/>
            <person name="Dante M."/>
            <person name="Pepin K."/>
            <person name="Hillier L.W."/>
            <person name="Nelson J."/>
            <person name="Spieth J."/>
            <person name="Ryan E."/>
            <person name="Andrews S."/>
            <person name="Geisel C."/>
            <person name="Layman D."/>
            <person name="Du H."/>
            <person name="Ali J."/>
            <person name="Berghoff A."/>
            <person name="Jones K."/>
            <person name="Drone K."/>
            <person name="Cotton M."/>
            <person name="Joshu C."/>
            <person name="Antonoiu B."/>
            <person name="Zidanic M."/>
            <person name="Strong C."/>
            <person name="Sun H."/>
            <person name="Lamar B."/>
            <person name="Yordan C."/>
            <person name="Ma P."/>
            <person name="Zhong J."/>
            <person name="Preston R."/>
            <person name="Vil D."/>
            <person name="Shekher M."/>
            <person name="Matero A."/>
            <person name="Shah R."/>
            <person name="Swaby I.K."/>
            <person name="O'Shaughnessy A."/>
            <person name="Rodriguez M."/>
            <person name="Hoffman J."/>
            <person name="Till S."/>
            <person name="Granat S."/>
            <person name="Shohdy N."/>
            <person name="Hasegawa A."/>
            <person name="Hameed A."/>
            <person name="Lodhi M."/>
            <person name="Johnson A."/>
            <person name="Chen E."/>
            <person name="Marra M.A."/>
            <person name="Martienssen R."/>
            <person name="McCombie W.R."/>
        </authorList>
    </citation>
    <scope>NUCLEOTIDE SEQUENCE [LARGE SCALE GENOMIC DNA]</scope>
    <source>
        <strain>cv. Columbia</strain>
    </source>
</reference>
<reference key="2">
    <citation type="journal article" date="2017" name="Plant J.">
        <title>Araport11: a complete reannotation of the Arabidopsis thaliana reference genome.</title>
        <authorList>
            <person name="Cheng C.Y."/>
            <person name="Krishnakumar V."/>
            <person name="Chan A.P."/>
            <person name="Thibaud-Nissen F."/>
            <person name="Schobel S."/>
            <person name="Town C.D."/>
        </authorList>
    </citation>
    <scope>GENOME REANNOTATION</scope>
    <source>
        <strain>cv. Columbia</strain>
    </source>
</reference>
<reference key="3">
    <citation type="submission" date="2005-03" db="EMBL/GenBank/DDBJ databases">
        <title>Large-scale analysis of RIKEN Arabidopsis full-length (RAFL) cDNAs.</title>
        <authorList>
            <person name="Totoki Y."/>
            <person name="Seki M."/>
            <person name="Ishida J."/>
            <person name="Nakajima M."/>
            <person name="Enju A."/>
            <person name="Kamiya A."/>
            <person name="Narusaka M."/>
            <person name="Shin-i T."/>
            <person name="Nakagawa M."/>
            <person name="Sakamoto N."/>
            <person name="Oishi K."/>
            <person name="Kohara Y."/>
            <person name="Kobayashi M."/>
            <person name="Toyoda A."/>
            <person name="Sakaki Y."/>
            <person name="Sakurai T."/>
            <person name="Iida K."/>
            <person name="Akiyama K."/>
            <person name="Satou M."/>
            <person name="Toyoda T."/>
            <person name="Konagaya A."/>
            <person name="Carninci P."/>
            <person name="Kawai J."/>
            <person name="Hayashizaki Y."/>
            <person name="Shinozaki K."/>
        </authorList>
    </citation>
    <scope>NUCLEOTIDE SEQUENCE [LARGE SCALE MRNA] OF 152-871</scope>
    <source>
        <strain>cv. Columbia</strain>
    </source>
</reference>
<reference key="4">
    <citation type="journal article" date="1999" name="Mol. Gen. Genet.">
        <title>Genetic analysis of leaf form mutants from the Arabidopsis information service collection.</title>
        <authorList>
            <person name="Serrano-Cartagena J."/>
            <person name="Robles P."/>
            <person name="Ponce M.R."/>
            <person name="Micol J.L."/>
        </authorList>
    </citation>
    <scope>DISRUPTION PHENOTYPE</scope>
</reference>
<reference key="5">
    <citation type="journal article" date="2000" name="Plant Mol. Biol.">
        <title>In Arabidopsis thaliana, 1% of the genome codes for a novel protein family unique to plants.</title>
        <authorList>
            <person name="Aubourg S."/>
            <person name="Boudet N."/>
            <person name="Kreis M."/>
            <person name="Lecharny A."/>
        </authorList>
    </citation>
    <scope>GENE FAMILY</scope>
</reference>
<reference key="6">
    <citation type="journal article" date="2004" name="Plant Cell">
        <title>Genome-wide analysis of Arabidopsis pentatricopeptide repeat proteins reveals their essential role in organelle biogenesis.</title>
        <authorList>
            <person name="Lurin C."/>
            <person name="Andres C."/>
            <person name="Aubourg S."/>
            <person name="Bellaoui M."/>
            <person name="Bitton F."/>
            <person name="Bruyere C."/>
            <person name="Caboche M."/>
            <person name="Debast C."/>
            <person name="Gualberto J."/>
            <person name="Hoffmann B."/>
            <person name="Lecharny A."/>
            <person name="Le Ret M."/>
            <person name="Martin-Magniette M.-L."/>
            <person name="Mireau H."/>
            <person name="Peeters N."/>
            <person name="Renou J.-P."/>
            <person name="Szurek B."/>
            <person name="Taconnat L."/>
            <person name="Small I."/>
        </authorList>
    </citation>
    <scope>GENE FAMILY</scope>
</reference>
<reference key="7">
    <citation type="journal article" date="2008" name="Plant J.">
        <title>Vein patterning screens and the defectively organized tributaries mutants in Arabidopsis thaliana.</title>
        <authorList>
            <person name="Petricka J.J."/>
            <person name="Clay N.K."/>
            <person name="Nelson T.M."/>
        </authorList>
    </citation>
    <scope>FUNCTION</scope>
    <scope>TISSUE SPECIFICITY</scope>
    <scope>DISRUPTION PHENOTYPE</scope>
</reference>
<reference key="8">
    <citation type="journal article" date="2013" name="J. Biol. Chem.">
        <title>Identification of two pentatricopeptide repeat genes required for RNA editing and zinc binding by C-terminal cytidine deaminase-like domains.</title>
        <authorList>
            <person name="Hayes M.L."/>
            <person name="Giang K."/>
            <person name="Berhane B."/>
            <person name="Mulligan R.M."/>
        </authorList>
    </citation>
    <scope>FUNCTION</scope>
    <scope>COFACTOR</scope>
</reference>
<keyword id="KW-0150">Chloroplast</keyword>
<keyword id="KW-0479">Metal-binding</keyword>
<keyword id="KW-0507">mRNA processing</keyword>
<keyword id="KW-0934">Plastid</keyword>
<keyword id="KW-1185">Reference proteome</keyword>
<keyword id="KW-0677">Repeat</keyword>
<keyword id="KW-0691">RNA editing</keyword>
<keyword id="KW-0694">RNA-binding</keyword>
<keyword id="KW-0809">Transit peptide</keyword>
<keyword id="KW-0862">Zinc</keyword>
<dbReference type="EMBL" id="AL035526">
    <property type="protein sequence ID" value="CAB37460.1"/>
    <property type="molecule type" value="Genomic_DNA"/>
</dbReference>
<dbReference type="EMBL" id="AL161549">
    <property type="protein sequence ID" value="CAB78877.1"/>
    <property type="molecule type" value="Genomic_DNA"/>
</dbReference>
<dbReference type="EMBL" id="CP002687">
    <property type="protein sequence ID" value="AEE84086.1"/>
    <property type="molecule type" value="Genomic_DNA"/>
</dbReference>
<dbReference type="EMBL" id="AK221529">
    <property type="protein sequence ID" value="BAD94843.1"/>
    <property type="molecule type" value="mRNA"/>
</dbReference>
<dbReference type="PIR" id="T04867">
    <property type="entry name" value="T04867"/>
</dbReference>
<dbReference type="RefSeq" id="NP_193610.1">
    <property type="nucleotide sequence ID" value="NM_117991.3"/>
</dbReference>
<dbReference type="SMR" id="Q9SN39"/>
<dbReference type="FunCoup" id="Q9SN39">
    <property type="interactions" value="9"/>
</dbReference>
<dbReference type="STRING" id="3702.Q9SN39"/>
<dbReference type="iPTMnet" id="Q9SN39"/>
<dbReference type="PaxDb" id="3702-AT4G18750.1"/>
<dbReference type="ProteomicsDB" id="248986"/>
<dbReference type="EnsemblPlants" id="AT4G18750.1">
    <property type="protein sequence ID" value="AT4G18750.1"/>
    <property type="gene ID" value="AT4G18750"/>
</dbReference>
<dbReference type="GeneID" id="827609"/>
<dbReference type="Gramene" id="AT4G18750.1">
    <property type="protein sequence ID" value="AT4G18750.1"/>
    <property type="gene ID" value="AT4G18750"/>
</dbReference>
<dbReference type="KEGG" id="ath:AT4G18750"/>
<dbReference type="Araport" id="AT4G18750"/>
<dbReference type="TAIR" id="AT4G18750">
    <property type="gene designation" value="DOT4"/>
</dbReference>
<dbReference type="eggNOG" id="KOG4197">
    <property type="taxonomic scope" value="Eukaryota"/>
</dbReference>
<dbReference type="HOGENOM" id="CLU_002706_15_0_1"/>
<dbReference type="InParanoid" id="Q9SN39"/>
<dbReference type="OMA" id="SCVLKCF"/>
<dbReference type="PhylomeDB" id="Q9SN39"/>
<dbReference type="PRO" id="PR:Q9SN39"/>
<dbReference type="Proteomes" id="UP000006548">
    <property type="component" value="Chromosome 4"/>
</dbReference>
<dbReference type="ExpressionAtlas" id="Q9SN39">
    <property type="expression patterns" value="baseline and differential"/>
</dbReference>
<dbReference type="GO" id="GO:0009507">
    <property type="term" value="C:chloroplast"/>
    <property type="evidence" value="ECO:0007669"/>
    <property type="project" value="UniProtKB-SubCell"/>
</dbReference>
<dbReference type="GO" id="GO:0003723">
    <property type="term" value="F:RNA binding"/>
    <property type="evidence" value="ECO:0007669"/>
    <property type="project" value="UniProtKB-KW"/>
</dbReference>
<dbReference type="GO" id="GO:0008270">
    <property type="term" value="F:zinc ion binding"/>
    <property type="evidence" value="ECO:0007669"/>
    <property type="project" value="InterPro"/>
</dbReference>
<dbReference type="GO" id="GO:1900865">
    <property type="term" value="P:chloroplast RNA modification"/>
    <property type="evidence" value="ECO:0000315"/>
    <property type="project" value="UniProtKB"/>
</dbReference>
<dbReference type="GO" id="GO:0010588">
    <property type="term" value="P:cotyledon vascular tissue pattern formation"/>
    <property type="evidence" value="ECO:0000315"/>
    <property type="project" value="TAIR"/>
</dbReference>
<dbReference type="GO" id="GO:0048366">
    <property type="term" value="P:leaf development"/>
    <property type="evidence" value="ECO:0000315"/>
    <property type="project" value="TAIR"/>
</dbReference>
<dbReference type="GO" id="GO:0010305">
    <property type="term" value="P:leaf vascular tissue pattern formation"/>
    <property type="evidence" value="ECO:0000315"/>
    <property type="project" value="TAIR"/>
</dbReference>
<dbReference type="GO" id="GO:0006397">
    <property type="term" value="P:mRNA processing"/>
    <property type="evidence" value="ECO:0007669"/>
    <property type="project" value="UniProtKB-KW"/>
</dbReference>
<dbReference type="GO" id="GO:0010087">
    <property type="term" value="P:phloem or xylem histogenesis"/>
    <property type="evidence" value="ECO:0000315"/>
    <property type="project" value="TAIR"/>
</dbReference>
<dbReference type="FunFam" id="1.25.40.10:FF:000344">
    <property type="entry name" value="Pentatricopeptide repeat-containing protein"/>
    <property type="match status" value="1"/>
</dbReference>
<dbReference type="FunFam" id="1.25.40.10:FF:000158">
    <property type="entry name" value="pentatricopeptide repeat-containing protein At2g33680"/>
    <property type="match status" value="1"/>
</dbReference>
<dbReference type="FunFam" id="1.25.40.10:FF:000436">
    <property type="entry name" value="Pentatricopeptide repeat-containing protein At5g39350 family"/>
    <property type="match status" value="1"/>
</dbReference>
<dbReference type="FunFam" id="1.25.40.10:FF:000073">
    <property type="entry name" value="Pentatricopeptide repeat-containing protein chloroplastic"/>
    <property type="match status" value="1"/>
</dbReference>
<dbReference type="Gene3D" id="1.25.40.10">
    <property type="entry name" value="Tetratricopeptide repeat domain"/>
    <property type="match status" value="5"/>
</dbReference>
<dbReference type="InterPro" id="IPR032867">
    <property type="entry name" value="DYW_dom"/>
</dbReference>
<dbReference type="InterPro" id="IPR046848">
    <property type="entry name" value="E_motif"/>
</dbReference>
<dbReference type="InterPro" id="IPR002885">
    <property type="entry name" value="Pentatricopeptide_rpt"/>
</dbReference>
<dbReference type="InterPro" id="IPR046960">
    <property type="entry name" value="PPR_At4g14850-like_plant"/>
</dbReference>
<dbReference type="InterPro" id="IPR011990">
    <property type="entry name" value="TPR-like_helical_dom_sf"/>
</dbReference>
<dbReference type="NCBIfam" id="TIGR00756">
    <property type="entry name" value="PPR"/>
    <property type="match status" value="9"/>
</dbReference>
<dbReference type="PANTHER" id="PTHR24015">
    <property type="entry name" value="OS07G0578800 PROTEIN-RELATED"/>
    <property type="match status" value="1"/>
</dbReference>
<dbReference type="PANTHER" id="PTHR24015:SF548">
    <property type="entry name" value="OS08G0340900 PROTEIN"/>
    <property type="match status" value="1"/>
</dbReference>
<dbReference type="Pfam" id="PF14432">
    <property type="entry name" value="DYW_deaminase"/>
    <property type="match status" value="1"/>
</dbReference>
<dbReference type="Pfam" id="PF20431">
    <property type="entry name" value="E_motif"/>
    <property type="match status" value="1"/>
</dbReference>
<dbReference type="Pfam" id="PF01535">
    <property type="entry name" value="PPR"/>
    <property type="match status" value="1"/>
</dbReference>
<dbReference type="Pfam" id="PF13041">
    <property type="entry name" value="PPR_2"/>
    <property type="match status" value="5"/>
</dbReference>
<dbReference type="PROSITE" id="PS51375">
    <property type="entry name" value="PPR"/>
    <property type="match status" value="18"/>
</dbReference>
<gene>
    <name evidence="6" type="primary">DOT4</name>
    <name evidence="5" type="synonym">FLV</name>
    <name type="synonym">PCMP-H45</name>
    <name type="ordered locus">At4g18750</name>
    <name type="ORF">F28A21.160</name>
</gene>
<comment type="function">
    <text evidence="3 4">Plays a major role in single RNA editing events in chloroplasts. Acts as a site-recognition transacting factor involved in the edition of the unique site (corresponding to cytidine-488) of rpoC1, which is a plastid-encoded subunit of the chloroplast DNA-directed RNA polymerase. May provide the catalytic activity for editing site conversion (PubMed:24194514). Involved in leaf vasculature patterning (PubMed:18643975).</text>
</comment>
<comment type="cofactor">
    <cofactor evidence="1">
        <name>Zn(2+)</name>
        <dbReference type="ChEBI" id="CHEBI:29105"/>
    </cofactor>
    <text evidence="1">Binds 2 zinc ions per subunit.</text>
</comment>
<comment type="subcellular location">
    <subcellularLocation>
        <location evidence="7">Plastid</location>
        <location evidence="7">Chloroplast</location>
    </subcellularLocation>
</comment>
<comment type="tissue specificity">
    <text evidence="3">Weakly expressed in leaves.</text>
</comment>
<comment type="disruption phenotype">
    <text evidence="3">Defects in venation pattern in leaves and cotyledons.</text>
</comment>
<comment type="similarity">
    <text evidence="7">Belongs to the PPR family. PCMP-H subfamily.</text>
</comment>
<comment type="online information" name="Pentatricopeptide repeat proteins">
    <link uri="https://ppr.plantenergy.uwa.edu.au"/>
</comment>
<feature type="transit peptide" description="Chloroplast" evidence="2">
    <location>
        <begin position="1"/>
        <end position="28"/>
    </location>
</feature>
<feature type="chain" id="PRO_0000363437" description="Pentatricopeptide repeat-containing protein DOT4, chloroplastic">
    <location>
        <begin position="29"/>
        <end position="871"/>
    </location>
</feature>
<feature type="repeat" description="PPR 1">
    <location>
        <begin position="60"/>
        <end position="94"/>
    </location>
</feature>
<feature type="repeat" description="PPR 2">
    <location>
        <begin position="96"/>
        <end position="127"/>
    </location>
</feature>
<feature type="repeat" description="PPR 3">
    <location>
        <begin position="128"/>
        <end position="158"/>
    </location>
</feature>
<feature type="repeat" description="PPR 4">
    <location>
        <begin position="159"/>
        <end position="193"/>
    </location>
</feature>
<feature type="repeat" description="PPR 5">
    <location>
        <begin position="194"/>
        <end position="228"/>
    </location>
</feature>
<feature type="repeat" description="PPR 6">
    <location>
        <begin position="229"/>
        <end position="259"/>
    </location>
</feature>
<feature type="repeat" description="PPR 7">
    <location>
        <begin position="260"/>
        <end position="294"/>
    </location>
</feature>
<feature type="repeat" description="PPR 8">
    <location>
        <begin position="295"/>
        <end position="329"/>
    </location>
</feature>
<feature type="repeat" description="PPR 9">
    <location>
        <begin position="330"/>
        <end position="360"/>
    </location>
</feature>
<feature type="repeat" description="PPR 10">
    <location>
        <begin position="361"/>
        <end position="395"/>
    </location>
</feature>
<feature type="repeat" description="PPR 11">
    <location>
        <begin position="396"/>
        <end position="430"/>
    </location>
</feature>
<feature type="repeat" description="PPR 12">
    <location>
        <begin position="431"/>
        <end position="465"/>
    </location>
</feature>
<feature type="repeat" description="PPR 13">
    <location>
        <begin position="466"/>
        <end position="497"/>
    </location>
</feature>
<feature type="repeat" description="PPR 14">
    <location>
        <begin position="498"/>
        <end position="532"/>
    </location>
</feature>
<feature type="repeat" description="PPR 15">
    <location>
        <begin position="533"/>
        <end position="563"/>
    </location>
</feature>
<feature type="repeat" description="PPR 16">
    <location>
        <begin position="564"/>
        <end position="598"/>
    </location>
</feature>
<feature type="repeat" description="PPR 17">
    <location>
        <begin position="599"/>
        <end position="629"/>
    </location>
</feature>
<feature type="repeat" description="PPR 18">
    <location>
        <begin position="635"/>
        <end position="665"/>
    </location>
</feature>
<feature type="region of interest" description="Type E motif">
    <location>
        <begin position="670"/>
        <end position="745"/>
    </location>
</feature>
<feature type="region of interest" description="Type E(+) motif">
    <location>
        <begin position="746"/>
        <end position="776"/>
    </location>
</feature>
<feature type="region of interest" description="Type DYW motif">
    <location>
        <begin position="777"/>
        <end position="871"/>
    </location>
</feature>
<name>PP320_ARATH</name>